<comment type="function">
    <text evidence="1">Produces ATP from ADP in the presence of a proton gradient across the membrane. The alpha chain is a regulatory subunit.</text>
</comment>
<comment type="catalytic activity">
    <reaction evidence="1">
        <text>ATP + H2O + 4 H(+)(in) = ADP + phosphate + 5 H(+)(out)</text>
        <dbReference type="Rhea" id="RHEA:57720"/>
        <dbReference type="ChEBI" id="CHEBI:15377"/>
        <dbReference type="ChEBI" id="CHEBI:15378"/>
        <dbReference type="ChEBI" id="CHEBI:30616"/>
        <dbReference type="ChEBI" id="CHEBI:43474"/>
        <dbReference type="ChEBI" id="CHEBI:456216"/>
        <dbReference type="EC" id="7.1.2.2"/>
    </reaction>
</comment>
<comment type="subunit">
    <text evidence="1">F-type ATPases have 2 components, CF(1) - the catalytic core - and CF(0) - the membrane proton channel. CF(1) has five subunits: alpha(3), beta(3), gamma(1), delta(1), epsilon(1). CF(0) has three main subunits: a(1), b(2) and c(9-12). The alpha and beta chains form an alternating ring which encloses part of the gamma chain. CF(1) is attached to CF(0) by a central stalk formed by the gamma and epsilon chains, while a peripheral stalk is formed by the delta and b chains.</text>
</comment>
<comment type="subcellular location">
    <subcellularLocation>
        <location evidence="1">Cell inner membrane</location>
        <topology evidence="1">Peripheral membrane protein</topology>
    </subcellularLocation>
</comment>
<comment type="similarity">
    <text evidence="1">Belongs to the ATPase alpha/beta chains family.</text>
</comment>
<evidence type="ECO:0000255" key="1">
    <source>
        <dbReference type="HAMAP-Rule" id="MF_01346"/>
    </source>
</evidence>
<protein>
    <recommendedName>
        <fullName evidence="1">ATP synthase subunit alpha</fullName>
        <ecNumber evidence="1">7.1.2.2</ecNumber>
    </recommendedName>
    <alternativeName>
        <fullName evidence="1">ATP synthase F1 sector subunit alpha</fullName>
    </alternativeName>
    <alternativeName>
        <fullName evidence="1">F-ATPase subunit alpha</fullName>
    </alternativeName>
</protein>
<accession>Q7VU46</accession>
<name>ATPA_BORPE</name>
<proteinExistence type="inferred from homology"/>
<organism>
    <name type="scientific">Bordetella pertussis (strain Tohama I / ATCC BAA-589 / NCTC 13251)</name>
    <dbReference type="NCBI Taxonomy" id="257313"/>
    <lineage>
        <taxon>Bacteria</taxon>
        <taxon>Pseudomonadati</taxon>
        <taxon>Pseudomonadota</taxon>
        <taxon>Betaproteobacteria</taxon>
        <taxon>Burkholderiales</taxon>
        <taxon>Alcaligenaceae</taxon>
        <taxon>Bordetella</taxon>
    </lineage>
</organism>
<reference key="1">
    <citation type="journal article" date="2003" name="Nat. Genet.">
        <title>Comparative analysis of the genome sequences of Bordetella pertussis, Bordetella parapertussis and Bordetella bronchiseptica.</title>
        <authorList>
            <person name="Parkhill J."/>
            <person name="Sebaihia M."/>
            <person name="Preston A."/>
            <person name="Murphy L.D."/>
            <person name="Thomson N.R."/>
            <person name="Harris D.E."/>
            <person name="Holden M.T.G."/>
            <person name="Churcher C.M."/>
            <person name="Bentley S.D."/>
            <person name="Mungall K.L."/>
            <person name="Cerdeno-Tarraga A.-M."/>
            <person name="Temple L."/>
            <person name="James K.D."/>
            <person name="Harris B."/>
            <person name="Quail M.A."/>
            <person name="Achtman M."/>
            <person name="Atkin R."/>
            <person name="Baker S."/>
            <person name="Basham D."/>
            <person name="Bason N."/>
            <person name="Cherevach I."/>
            <person name="Chillingworth T."/>
            <person name="Collins M."/>
            <person name="Cronin A."/>
            <person name="Davis P."/>
            <person name="Doggett J."/>
            <person name="Feltwell T."/>
            <person name="Goble A."/>
            <person name="Hamlin N."/>
            <person name="Hauser H."/>
            <person name="Holroyd S."/>
            <person name="Jagels K."/>
            <person name="Leather S."/>
            <person name="Moule S."/>
            <person name="Norberczak H."/>
            <person name="O'Neil S."/>
            <person name="Ormond D."/>
            <person name="Price C."/>
            <person name="Rabbinowitsch E."/>
            <person name="Rutter S."/>
            <person name="Sanders M."/>
            <person name="Saunders D."/>
            <person name="Seeger K."/>
            <person name="Sharp S."/>
            <person name="Simmonds M."/>
            <person name="Skelton J."/>
            <person name="Squares R."/>
            <person name="Squares S."/>
            <person name="Stevens K."/>
            <person name="Unwin L."/>
            <person name="Whitehead S."/>
            <person name="Barrell B.G."/>
            <person name="Maskell D.J."/>
        </authorList>
    </citation>
    <scope>NUCLEOTIDE SEQUENCE [LARGE SCALE GENOMIC DNA]</scope>
    <source>
        <strain>Tohama I / ATCC BAA-589 / NCTC 13251</strain>
    </source>
</reference>
<dbReference type="EC" id="7.1.2.2" evidence="1"/>
<dbReference type="EMBL" id="BX640421">
    <property type="protein sequence ID" value="CAE43551.1"/>
    <property type="molecule type" value="Genomic_DNA"/>
</dbReference>
<dbReference type="RefSeq" id="NP_881828.1">
    <property type="nucleotide sequence ID" value="NC_002929.2"/>
</dbReference>
<dbReference type="RefSeq" id="WP_010931386.1">
    <property type="nucleotide sequence ID" value="NZ_CP039022.1"/>
</dbReference>
<dbReference type="SMR" id="Q7VU46"/>
<dbReference type="STRING" id="257313.BP3286"/>
<dbReference type="PaxDb" id="257313-BP3286"/>
<dbReference type="GeneID" id="69603212"/>
<dbReference type="KEGG" id="bpe:BP3286"/>
<dbReference type="PATRIC" id="fig|257313.5.peg.3558"/>
<dbReference type="eggNOG" id="COG0056">
    <property type="taxonomic scope" value="Bacteria"/>
</dbReference>
<dbReference type="HOGENOM" id="CLU_010091_2_1_4"/>
<dbReference type="Proteomes" id="UP000002676">
    <property type="component" value="Chromosome"/>
</dbReference>
<dbReference type="GO" id="GO:0005886">
    <property type="term" value="C:plasma membrane"/>
    <property type="evidence" value="ECO:0007669"/>
    <property type="project" value="UniProtKB-SubCell"/>
</dbReference>
<dbReference type="GO" id="GO:0045259">
    <property type="term" value="C:proton-transporting ATP synthase complex"/>
    <property type="evidence" value="ECO:0007669"/>
    <property type="project" value="UniProtKB-KW"/>
</dbReference>
<dbReference type="GO" id="GO:0043531">
    <property type="term" value="F:ADP binding"/>
    <property type="evidence" value="ECO:0007669"/>
    <property type="project" value="TreeGrafter"/>
</dbReference>
<dbReference type="GO" id="GO:0005524">
    <property type="term" value="F:ATP binding"/>
    <property type="evidence" value="ECO:0007669"/>
    <property type="project" value="UniProtKB-UniRule"/>
</dbReference>
<dbReference type="GO" id="GO:0046933">
    <property type="term" value="F:proton-transporting ATP synthase activity, rotational mechanism"/>
    <property type="evidence" value="ECO:0007669"/>
    <property type="project" value="UniProtKB-UniRule"/>
</dbReference>
<dbReference type="CDD" id="cd18113">
    <property type="entry name" value="ATP-synt_F1_alpha_C"/>
    <property type="match status" value="1"/>
</dbReference>
<dbReference type="CDD" id="cd18116">
    <property type="entry name" value="ATP-synt_F1_alpha_N"/>
    <property type="match status" value="1"/>
</dbReference>
<dbReference type="CDD" id="cd01132">
    <property type="entry name" value="F1-ATPase_alpha_CD"/>
    <property type="match status" value="1"/>
</dbReference>
<dbReference type="FunFam" id="1.20.150.20:FF:000001">
    <property type="entry name" value="ATP synthase subunit alpha"/>
    <property type="match status" value="1"/>
</dbReference>
<dbReference type="FunFam" id="2.40.30.20:FF:000001">
    <property type="entry name" value="ATP synthase subunit alpha"/>
    <property type="match status" value="1"/>
</dbReference>
<dbReference type="FunFam" id="3.40.50.300:FF:000002">
    <property type="entry name" value="ATP synthase subunit alpha"/>
    <property type="match status" value="1"/>
</dbReference>
<dbReference type="Gene3D" id="2.40.30.20">
    <property type="match status" value="1"/>
</dbReference>
<dbReference type="Gene3D" id="1.20.150.20">
    <property type="entry name" value="ATP synthase alpha/beta chain, C-terminal domain"/>
    <property type="match status" value="1"/>
</dbReference>
<dbReference type="Gene3D" id="3.40.50.300">
    <property type="entry name" value="P-loop containing nucleotide triphosphate hydrolases"/>
    <property type="match status" value="1"/>
</dbReference>
<dbReference type="HAMAP" id="MF_01346">
    <property type="entry name" value="ATP_synth_alpha_bact"/>
    <property type="match status" value="1"/>
</dbReference>
<dbReference type="InterPro" id="IPR023366">
    <property type="entry name" value="ATP_synth_asu-like_sf"/>
</dbReference>
<dbReference type="InterPro" id="IPR000793">
    <property type="entry name" value="ATP_synth_asu_C"/>
</dbReference>
<dbReference type="InterPro" id="IPR038376">
    <property type="entry name" value="ATP_synth_asu_C_sf"/>
</dbReference>
<dbReference type="InterPro" id="IPR033732">
    <property type="entry name" value="ATP_synth_F1_a_nt-bd_dom"/>
</dbReference>
<dbReference type="InterPro" id="IPR005294">
    <property type="entry name" value="ATP_synth_F1_asu"/>
</dbReference>
<dbReference type="InterPro" id="IPR020003">
    <property type="entry name" value="ATPase_a/bsu_AS"/>
</dbReference>
<dbReference type="InterPro" id="IPR004100">
    <property type="entry name" value="ATPase_F1/V1/A1_a/bsu_N"/>
</dbReference>
<dbReference type="InterPro" id="IPR036121">
    <property type="entry name" value="ATPase_F1/V1/A1_a/bsu_N_sf"/>
</dbReference>
<dbReference type="InterPro" id="IPR000194">
    <property type="entry name" value="ATPase_F1/V1/A1_a/bsu_nucl-bd"/>
</dbReference>
<dbReference type="InterPro" id="IPR027417">
    <property type="entry name" value="P-loop_NTPase"/>
</dbReference>
<dbReference type="NCBIfam" id="TIGR00962">
    <property type="entry name" value="atpA"/>
    <property type="match status" value="1"/>
</dbReference>
<dbReference type="NCBIfam" id="NF009884">
    <property type="entry name" value="PRK13343.1"/>
    <property type="match status" value="1"/>
</dbReference>
<dbReference type="PANTHER" id="PTHR48082">
    <property type="entry name" value="ATP SYNTHASE SUBUNIT ALPHA, MITOCHONDRIAL"/>
    <property type="match status" value="1"/>
</dbReference>
<dbReference type="PANTHER" id="PTHR48082:SF2">
    <property type="entry name" value="ATP SYNTHASE SUBUNIT ALPHA, MITOCHONDRIAL"/>
    <property type="match status" value="1"/>
</dbReference>
<dbReference type="Pfam" id="PF00006">
    <property type="entry name" value="ATP-synt_ab"/>
    <property type="match status" value="1"/>
</dbReference>
<dbReference type="Pfam" id="PF00306">
    <property type="entry name" value="ATP-synt_ab_C"/>
    <property type="match status" value="1"/>
</dbReference>
<dbReference type="Pfam" id="PF02874">
    <property type="entry name" value="ATP-synt_ab_N"/>
    <property type="match status" value="1"/>
</dbReference>
<dbReference type="PIRSF" id="PIRSF039088">
    <property type="entry name" value="F_ATPase_subunit_alpha"/>
    <property type="match status" value="1"/>
</dbReference>
<dbReference type="SUPFAM" id="SSF47917">
    <property type="entry name" value="C-terminal domain of alpha and beta subunits of F1 ATP synthase"/>
    <property type="match status" value="1"/>
</dbReference>
<dbReference type="SUPFAM" id="SSF50615">
    <property type="entry name" value="N-terminal domain of alpha and beta subunits of F1 ATP synthase"/>
    <property type="match status" value="1"/>
</dbReference>
<dbReference type="SUPFAM" id="SSF52540">
    <property type="entry name" value="P-loop containing nucleoside triphosphate hydrolases"/>
    <property type="match status" value="1"/>
</dbReference>
<dbReference type="PROSITE" id="PS00152">
    <property type="entry name" value="ATPASE_ALPHA_BETA"/>
    <property type="match status" value="1"/>
</dbReference>
<feature type="chain" id="PRO_0000238211" description="ATP synthase subunit alpha">
    <location>
        <begin position="1"/>
        <end position="513"/>
    </location>
</feature>
<feature type="binding site" evidence="1">
    <location>
        <begin position="169"/>
        <end position="176"/>
    </location>
    <ligand>
        <name>ATP</name>
        <dbReference type="ChEBI" id="CHEBI:30616"/>
    </ligand>
</feature>
<feature type="site" description="Required for activity" evidence="1">
    <location>
        <position position="373"/>
    </location>
</feature>
<keyword id="KW-0066">ATP synthesis</keyword>
<keyword id="KW-0067">ATP-binding</keyword>
<keyword id="KW-0997">Cell inner membrane</keyword>
<keyword id="KW-1003">Cell membrane</keyword>
<keyword id="KW-0139">CF(1)</keyword>
<keyword id="KW-0375">Hydrogen ion transport</keyword>
<keyword id="KW-0406">Ion transport</keyword>
<keyword id="KW-0472">Membrane</keyword>
<keyword id="KW-0547">Nucleotide-binding</keyword>
<keyword id="KW-1185">Reference proteome</keyword>
<keyword id="KW-1278">Translocase</keyword>
<keyword id="KW-0813">Transport</keyword>
<sequence>MQLNPSEISELLKSRIEGLGASTDVRTQGTVVSVTDGITRIHGLSDVMQGEMLEFPNNVFGVALNLERDSVGAVVLGDYTGVSEGDQVKTTGRILEVPVGPELKGRVVNTLGDAIDGKGPINTTQTDIIEKVAPGVIARRSVSQPLQTGIKAIDSMVPIGRGQRELIIGDRQTGKTAVAVDTIISQKGKGVTCVYVAIGQKASTINNVVRKLEEHGAMEYTIVVAAAASDSAAMQYMAAYAGCTMGEYFRDRGEDALIVYDDLTKQAWAYRQVSLLLRRPPGREAYPGDVFYLHSRLLERAARVNEEYVEKFTNGAVKGKTGSLTALPIIETQAGDVSAFVPTNVISITDGQIFLETDLFNAGVRPAINAGISVSRVGGAAQTKVIKKLSGGIRTDLAQYRELAAFAQFASDLDDATRRQLERGKRVVELLKQPQYQPLQVWELAVSLYAVNNGYLDDVDVAQILAFEKSLKDHLKAKHAALIQRIEDTKELSKDDEAELAAAVQDFKKHGAF</sequence>
<gene>
    <name evidence="1" type="primary">atpA</name>
    <name type="ordered locus">BP3286</name>
</gene>